<proteinExistence type="inferred from homology"/>
<accession>Q119M3</accession>
<sequence>MTEPLETELYLSSEKDELFEKGPWPKPFAFNAEVVKVFDNMVCRSVPLYREVVAGAVHWTRAYYQPKTRIIDIGCSTGTFLELLGRFLKQPAILVGIDNSSDMLDKAKEKLAQVEQIHQIELICESAENCSFEKSSVVVMNYTLQFLSLPQRQKLLRAIYQGLVPGGLLFISEKIRSDCPQFQETITHHYEAFKAKNGYAQNEIERKKEALENVLIPLSEAEQLQMLKQSGFSYIESLIKLHNFVSFVAFKSD</sequence>
<organism>
    <name type="scientific">Trichodesmium erythraeum (strain IMS101)</name>
    <dbReference type="NCBI Taxonomy" id="203124"/>
    <lineage>
        <taxon>Bacteria</taxon>
        <taxon>Bacillati</taxon>
        <taxon>Cyanobacteriota</taxon>
        <taxon>Cyanophyceae</taxon>
        <taxon>Oscillatoriophycideae</taxon>
        <taxon>Oscillatoriales</taxon>
        <taxon>Microcoleaceae</taxon>
        <taxon>Trichodesmium</taxon>
    </lineage>
</organism>
<dbReference type="EC" id="2.1.3.-" evidence="1"/>
<dbReference type="EMBL" id="CP000393">
    <property type="protein sequence ID" value="ABG49801.1"/>
    <property type="molecule type" value="Genomic_DNA"/>
</dbReference>
<dbReference type="RefSeq" id="WP_011610197.1">
    <property type="nucleotide sequence ID" value="NC_008312.1"/>
</dbReference>
<dbReference type="SMR" id="Q119M3"/>
<dbReference type="STRING" id="203124.Tery_0327"/>
<dbReference type="KEGG" id="ter:Tery_0327"/>
<dbReference type="eggNOG" id="COG2226">
    <property type="taxonomic scope" value="Bacteria"/>
</dbReference>
<dbReference type="HOGENOM" id="CLU_078475_0_0_3"/>
<dbReference type="OrthoDB" id="9808140at2"/>
<dbReference type="GO" id="GO:0016743">
    <property type="term" value="F:carboxyl- or carbamoyltransferase activity"/>
    <property type="evidence" value="ECO:0007669"/>
    <property type="project" value="UniProtKB-UniRule"/>
</dbReference>
<dbReference type="GO" id="GO:1904047">
    <property type="term" value="F:S-adenosyl-L-methionine binding"/>
    <property type="evidence" value="ECO:0007669"/>
    <property type="project" value="UniProtKB-UniRule"/>
</dbReference>
<dbReference type="GO" id="GO:0002098">
    <property type="term" value="P:tRNA wobble uridine modification"/>
    <property type="evidence" value="ECO:0007669"/>
    <property type="project" value="InterPro"/>
</dbReference>
<dbReference type="CDD" id="cd02440">
    <property type="entry name" value="AdoMet_MTases"/>
    <property type="match status" value="1"/>
</dbReference>
<dbReference type="Gene3D" id="3.40.50.150">
    <property type="entry name" value="Vaccinia Virus protein VP39"/>
    <property type="match status" value="1"/>
</dbReference>
<dbReference type="HAMAP" id="MF_01589">
    <property type="entry name" value="Cx_SAM_synthase"/>
    <property type="match status" value="1"/>
</dbReference>
<dbReference type="InterPro" id="IPR005271">
    <property type="entry name" value="CmoA"/>
</dbReference>
<dbReference type="InterPro" id="IPR041698">
    <property type="entry name" value="Methyltransf_25"/>
</dbReference>
<dbReference type="InterPro" id="IPR029063">
    <property type="entry name" value="SAM-dependent_MTases_sf"/>
</dbReference>
<dbReference type="NCBIfam" id="TIGR00740">
    <property type="entry name" value="carboxy-S-adenosyl-L-methionine synthase CmoA"/>
    <property type="match status" value="1"/>
</dbReference>
<dbReference type="PANTHER" id="PTHR43861:SF2">
    <property type="entry name" value="CARBOXY-S-ADENOSYL-L-METHIONINE SYNTHASE"/>
    <property type="match status" value="1"/>
</dbReference>
<dbReference type="PANTHER" id="PTHR43861">
    <property type="entry name" value="TRANS-ACONITATE 2-METHYLTRANSFERASE-RELATED"/>
    <property type="match status" value="1"/>
</dbReference>
<dbReference type="Pfam" id="PF13649">
    <property type="entry name" value="Methyltransf_25"/>
    <property type="match status" value="1"/>
</dbReference>
<dbReference type="PIRSF" id="PIRSF006325">
    <property type="entry name" value="MeTrfase_bac"/>
    <property type="match status" value="1"/>
</dbReference>
<dbReference type="SUPFAM" id="SSF53335">
    <property type="entry name" value="S-adenosyl-L-methionine-dependent methyltransferases"/>
    <property type="match status" value="1"/>
</dbReference>
<keyword id="KW-0949">S-adenosyl-L-methionine</keyword>
<keyword id="KW-0808">Transferase</keyword>
<feature type="chain" id="PRO_0000314397" description="Carboxy-S-adenosyl-L-methionine synthase">
    <location>
        <begin position="1"/>
        <end position="253"/>
    </location>
</feature>
<feature type="binding site" evidence="1">
    <location>
        <position position="49"/>
    </location>
    <ligand>
        <name>S-adenosyl-L-methionine</name>
        <dbReference type="ChEBI" id="CHEBI:59789"/>
    </ligand>
</feature>
<feature type="binding site" evidence="1">
    <location>
        <begin position="74"/>
        <end position="76"/>
    </location>
    <ligand>
        <name>S-adenosyl-L-methionine</name>
        <dbReference type="ChEBI" id="CHEBI:59789"/>
    </ligand>
</feature>
<feature type="binding site" evidence="1">
    <location>
        <begin position="98"/>
        <end position="99"/>
    </location>
    <ligand>
        <name>S-adenosyl-L-methionine</name>
        <dbReference type="ChEBI" id="CHEBI:59789"/>
    </ligand>
</feature>
<feature type="binding site" evidence="1">
    <location>
        <position position="141"/>
    </location>
    <ligand>
        <name>S-adenosyl-L-methionine</name>
        <dbReference type="ChEBI" id="CHEBI:59789"/>
    </ligand>
</feature>
<name>CMOA_TRIEI</name>
<gene>
    <name evidence="1" type="primary">cmoA</name>
    <name type="ordered locus">Tery_0327</name>
</gene>
<comment type="function">
    <text evidence="1">Catalyzes the conversion of S-adenosyl-L-methionine (SAM) to carboxy-S-adenosyl-L-methionine (Cx-SAM).</text>
</comment>
<comment type="catalytic activity">
    <reaction evidence="1">
        <text>prephenate + S-adenosyl-L-methionine = carboxy-S-adenosyl-L-methionine + 3-phenylpyruvate + H2O</text>
        <dbReference type="Rhea" id="RHEA:51692"/>
        <dbReference type="ChEBI" id="CHEBI:15377"/>
        <dbReference type="ChEBI" id="CHEBI:18005"/>
        <dbReference type="ChEBI" id="CHEBI:29934"/>
        <dbReference type="ChEBI" id="CHEBI:59789"/>
        <dbReference type="ChEBI" id="CHEBI:134278"/>
    </reaction>
</comment>
<comment type="similarity">
    <text evidence="1">Belongs to the class I-like SAM-binding methyltransferase superfamily. Cx-SAM synthase family.</text>
</comment>
<evidence type="ECO:0000255" key="1">
    <source>
        <dbReference type="HAMAP-Rule" id="MF_01589"/>
    </source>
</evidence>
<reference key="1">
    <citation type="journal article" date="2015" name="Proc. Natl. Acad. Sci. U.S.A.">
        <title>Trichodesmium genome maintains abundant, widespread noncoding DNA in situ, despite oligotrophic lifestyle.</title>
        <authorList>
            <person name="Walworth N."/>
            <person name="Pfreundt U."/>
            <person name="Nelson W.C."/>
            <person name="Mincer T."/>
            <person name="Heidelberg J.F."/>
            <person name="Fu F."/>
            <person name="Waterbury J.B."/>
            <person name="Glavina del Rio T."/>
            <person name="Goodwin L."/>
            <person name="Kyrpides N.C."/>
            <person name="Land M.L."/>
            <person name="Woyke T."/>
            <person name="Hutchins D.A."/>
            <person name="Hess W.R."/>
            <person name="Webb E.A."/>
        </authorList>
    </citation>
    <scope>NUCLEOTIDE SEQUENCE [LARGE SCALE GENOMIC DNA]</scope>
    <source>
        <strain>IMS101</strain>
    </source>
</reference>
<protein>
    <recommendedName>
        <fullName evidence="1">Carboxy-S-adenosyl-L-methionine synthase</fullName>
        <shortName evidence="1">Cx-SAM synthase</shortName>
        <ecNumber evidence="1">2.1.3.-</ecNumber>
    </recommendedName>
</protein>